<accession>B2UAZ1</accession>
<gene>
    <name evidence="1" type="primary">dapE</name>
    <name type="ordered locus">Rpic_1263</name>
</gene>
<keyword id="KW-0028">Amino-acid biosynthesis</keyword>
<keyword id="KW-0170">Cobalt</keyword>
<keyword id="KW-0220">Diaminopimelate biosynthesis</keyword>
<keyword id="KW-0378">Hydrolase</keyword>
<keyword id="KW-0457">Lysine biosynthesis</keyword>
<keyword id="KW-0479">Metal-binding</keyword>
<keyword id="KW-0862">Zinc</keyword>
<evidence type="ECO:0000255" key="1">
    <source>
        <dbReference type="HAMAP-Rule" id="MF_01690"/>
    </source>
</evidence>
<name>DAPE_RALPJ</name>
<comment type="function">
    <text evidence="1">Catalyzes the hydrolysis of N-succinyl-L,L-diaminopimelic acid (SDAP), forming succinate and LL-2,6-diaminopimelate (DAP), an intermediate involved in the bacterial biosynthesis of lysine and meso-diaminopimelic acid, an essential component of bacterial cell walls.</text>
</comment>
<comment type="catalytic activity">
    <reaction evidence="1">
        <text>N-succinyl-(2S,6S)-2,6-diaminopimelate + H2O = (2S,6S)-2,6-diaminopimelate + succinate</text>
        <dbReference type="Rhea" id="RHEA:22608"/>
        <dbReference type="ChEBI" id="CHEBI:15377"/>
        <dbReference type="ChEBI" id="CHEBI:30031"/>
        <dbReference type="ChEBI" id="CHEBI:57609"/>
        <dbReference type="ChEBI" id="CHEBI:58087"/>
        <dbReference type="EC" id="3.5.1.18"/>
    </reaction>
</comment>
<comment type="cofactor">
    <cofactor evidence="1">
        <name>Zn(2+)</name>
        <dbReference type="ChEBI" id="CHEBI:29105"/>
    </cofactor>
    <cofactor evidence="1">
        <name>Co(2+)</name>
        <dbReference type="ChEBI" id="CHEBI:48828"/>
    </cofactor>
    <text evidence="1">Binds 2 Zn(2+) or Co(2+) ions per subunit.</text>
</comment>
<comment type="pathway">
    <text evidence="1">Amino-acid biosynthesis; L-lysine biosynthesis via DAP pathway; LL-2,6-diaminopimelate from (S)-tetrahydrodipicolinate (succinylase route): step 3/3.</text>
</comment>
<comment type="subunit">
    <text evidence="1">Homodimer.</text>
</comment>
<comment type="similarity">
    <text evidence="1">Belongs to the peptidase M20A family. DapE subfamily.</text>
</comment>
<sequence length="386" mass="41588">MSHIQPTLALTEDLIRRRSVTPEDKGCQDVLIERLTAAGFECETVISGPDHFRVTNLWAVKRGRAGTDGKLLVFAGHTDVVPTGPVEQWHSDPFEPTHRDGKLYARGAADMKTSIAGFVVASEEFVAKHPDHAGSIGFLITSDEEGPAHDGTVKVCDLLRARGERLDYCVVGEPTSVSTLGDMVKNGRRGSLSGKLTVNGVQGHIAYPHLAKNPIHMAAPALAELAAAKWDDGNAYFPPTTWQMSNIHGGTGATNIIPGHVTIDFNFRFSTASTPDGLKARVHSILDAHGLDYTLDWTLGGEPFLTERGELSEALASAIQAECGVTTELSTTGGTSDGRFIAKICPQVIEFGPPNASIHKIDEHVEVAFIEPLKNVYRRVLETLIA</sequence>
<proteinExistence type="inferred from homology"/>
<organism>
    <name type="scientific">Ralstonia pickettii (strain 12J)</name>
    <dbReference type="NCBI Taxonomy" id="402626"/>
    <lineage>
        <taxon>Bacteria</taxon>
        <taxon>Pseudomonadati</taxon>
        <taxon>Pseudomonadota</taxon>
        <taxon>Betaproteobacteria</taxon>
        <taxon>Burkholderiales</taxon>
        <taxon>Burkholderiaceae</taxon>
        <taxon>Ralstonia</taxon>
    </lineage>
</organism>
<dbReference type="EC" id="3.5.1.18" evidence="1"/>
<dbReference type="EMBL" id="CP001068">
    <property type="protein sequence ID" value="ACD26407.1"/>
    <property type="molecule type" value="Genomic_DNA"/>
</dbReference>
<dbReference type="SMR" id="B2UAZ1"/>
<dbReference type="STRING" id="402626.Rpic_1263"/>
<dbReference type="KEGG" id="rpi:Rpic_1263"/>
<dbReference type="eggNOG" id="COG0624">
    <property type="taxonomic scope" value="Bacteria"/>
</dbReference>
<dbReference type="HOGENOM" id="CLU_021802_4_0_4"/>
<dbReference type="UniPathway" id="UPA00034">
    <property type="reaction ID" value="UER00021"/>
</dbReference>
<dbReference type="GO" id="GO:0008777">
    <property type="term" value="F:acetylornithine deacetylase activity"/>
    <property type="evidence" value="ECO:0007669"/>
    <property type="project" value="TreeGrafter"/>
</dbReference>
<dbReference type="GO" id="GO:0050897">
    <property type="term" value="F:cobalt ion binding"/>
    <property type="evidence" value="ECO:0007669"/>
    <property type="project" value="UniProtKB-UniRule"/>
</dbReference>
<dbReference type="GO" id="GO:0009014">
    <property type="term" value="F:succinyl-diaminopimelate desuccinylase activity"/>
    <property type="evidence" value="ECO:0007669"/>
    <property type="project" value="UniProtKB-UniRule"/>
</dbReference>
<dbReference type="GO" id="GO:0008270">
    <property type="term" value="F:zinc ion binding"/>
    <property type="evidence" value="ECO:0007669"/>
    <property type="project" value="UniProtKB-UniRule"/>
</dbReference>
<dbReference type="GO" id="GO:0019877">
    <property type="term" value="P:diaminopimelate biosynthetic process"/>
    <property type="evidence" value="ECO:0007669"/>
    <property type="project" value="UniProtKB-UniRule"/>
</dbReference>
<dbReference type="GO" id="GO:0006526">
    <property type="term" value="P:L-arginine biosynthetic process"/>
    <property type="evidence" value="ECO:0007669"/>
    <property type="project" value="TreeGrafter"/>
</dbReference>
<dbReference type="GO" id="GO:0009089">
    <property type="term" value="P:lysine biosynthetic process via diaminopimelate"/>
    <property type="evidence" value="ECO:0007669"/>
    <property type="project" value="UniProtKB-UniRule"/>
</dbReference>
<dbReference type="CDD" id="cd03891">
    <property type="entry name" value="M20_DapE_proteobac"/>
    <property type="match status" value="1"/>
</dbReference>
<dbReference type="FunFam" id="3.30.70.360:FF:000011">
    <property type="entry name" value="Succinyl-diaminopimelate desuccinylase"/>
    <property type="match status" value="1"/>
</dbReference>
<dbReference type="FunFam" id="3.40.630.10:FF:000005">
    <property type="entry name" value="Succinyl-diaminopimelate desuccinylase"/>
    <property type="match status" value="1"/>
</dbReference>
<dbReference type="Gene3D" id="3.40.630.10">
    <property type="entry name" value="Zn peptidases"/>
    <property type="match status" value="2"/>
</dbReference>
<dbReference type="HAMAP" id="MF_01690">
    <property type="entry name" value="DapE"/>
    <property type="match status" value="1"/>
</dbReference>
<dbReference type="InterPro" id="IPR036264">
    <property type="entry name" value="Bact_exopeptidase_dim_dom"/>
</dbReference>
<dbReference type="InterPro" id="IPR005941">
    <property type="entry name" value="DapE_proteobac"/>
</dbReference>
<dbReference type="InterPro" id="IPR002933">
    <property type="entry name" value="Peptidase_M20"/>
</dbReference>
<dbReference type="InterPro" id="IPR011650">
    <property type="entry name" value="Peptidase_M20_dimer"/>
</dbReference>
<dbReference type="InterPro" id="IPR050072">
    <property type="entry name" value="Peptidase_M20A"/>
</dbReference>
<dbReference type="NCBIfam" id="TIGR01246">
    <property type="entry name" value="dapE_proteo"/>
    <property type="match status" value="1"/>
</dbReference>
<dbReference type="NCBIfam" id="NF009557">
    <property type="entry name" value="PRK13009.1"/>
    <property type="match status" value="1"/>
</dbReference>
<dbReference type="PANTHER" id="PTHR43808">
    <property type="entry name" value="ACETYLORNITHINE DEACETYLASE"/>
    <property type="match status" value="1"/>
</dbReference>
<dbReference type="PANTHER" id="PTHR43808:SF31">
    <property type="entry name" value="N-ACETYL-L-CITRULLINE DEACETYLASE"/>
    <property type="match status" value="1"/>
</dbReference>
<dbReference type="Pfam" id="PF07687">
    <property type="entry name" value="M20_dimer"/>
    <property type="match status" value="1"/>
</dbReference>
<dbReference type="Pfam" id="PF01546">
    <property type="entry name" value="Peptidase_M20"/>
    <property type="match status" value="1"/>
</dbReference>
<dbReference type="SUPFAM" id="SSF55031">
    <property type="entry name" value="Bacterial exopeptidase dimerisation domain"/>
    <property type="match status" value="1"/>
</dbReference>
<dbReference type="SUPFAM" id="SSF53187">
    <property type="entry name" value="Zn-dependent exopeptidases"/>
    <property type="match status" value="1"/>
</dbReference>
<feature type="chain" id="PRO_0000375677" description="Succinyl-diaminopimelate desuccinylase">
    <location>
        <begin position="1"/>
        <end position="386"/>
    </location>
</feature>
<feature type="active site" evidence="1">
    <location>
        <position position="79"/>
    </location>
</feature>
<feature type="active site" description="Proton acceptor" evidence="1">
    <location>
        <position position="144"/>
    </location>
</feature>
<feature type="binding site" evidence="1">
    <location>
        <position position="77"/>
    </location>
    <ligand>
        <name>Zn(2+)</name>
        <dbReference type="ChEBI" id="CHEBI:29105"/>
        <label>1</label>
    </ligand>
</feature>
<feature type="binding site" evidence="1">
    <location>
        <position position="110"/>
    </location>
    <ligand>
        <name>Zn(2+)</name>
        <dbReference type="ChEBI" id="CHEBI:29105"/>
        <label>1</label>
    </ligand>
</feature>
<feature type="binding site" evidence="1">
    <location>
        <position position="110"/>
    </location>
    <ligand>
        <name>Zn(2+)</name>
        <dbReference type="ChEBI" id="CHEBI:29105"/>
        <label>2</label>
    </ligand>
</feature>
<feature type="binding site" evidence="1">
    <location>
        <position position="145"/>
    </location>
    <ligand>
        <name>Zn(2+)</name>
        <dbReference type="ChEBI" id="CHEBI:29105"/>
        <label>2</label>
    </ligand>
</feature>
<feature type="binding site" evidence="1">
    <location>
        <position position="173"/>
    </location>
    <ligand>
        <name>Zn(2+)</name>
        <dbReference type="ChEBI" id="CHEBI:29105"/>
        <label>1</label>
    </ligand>
</feature>
<feature type="binding site" evidence="1">
    <location>
        <position position="359"/>
    </location>
    <ligand>
        <name>Zn(2+)</name>
        <dbReference type="ChEBI" id="CHEBI:29105"/>
        <label>2</label>
    </ligand>
</feature>
<reference key="1">
    <citation type="submission" date="2008-05" db="EMBL/GenBank/DDBJ databases">
        <title>Complete sequence of chromosome 1 of Ralstonia pickettii 12J.</title>
        <authorList>
            <person name="Lucas S."/>
            <person name="Copeland A."/>
            <person name="Lapidus A."/>
            <person name="Glavina del Rio T."/>
            <person name="Dalin E."/>
            <person name="Tice H."/>
            <person name="Bruce D."/>
            <person name="Goodwin L."/>
            <person name="Pitluck S."/>
            <person name="Meincke L."/>
            <person name="Brettin T."/>
            <person name="Detter J.C."/>
            <person name="Han C."/>
            <person name="Kuske C.R."/>
            <person name="Schmutz J."/>
            <person name="Larimer F."/>
            <person name="Land M."/>
            <person name="Hauser L."/>
            <person name="Kyrpides N."/>
            <person name="Mikhailova N."/>
            <person name="Marsh T."/>
            <person name="Richardson P."/>
        </authorList>
    </citation>
    <scope>NUCLEOTIDE SEQUENCE [LARGE SCALE GENOMIC DNA]</scope>
    <source>
        <strain>12J</strain>
    </source>
</reference>
<protein>
    <recommendedName>
        <fullName evidence="1">Succinyl-diaminopimelate desuccinylase</fullName>
        <shortName evidence="1">SDAP desuccinylase</shortName>
        <ecNumber evidence="1">3.5.1.18</ecNumber>
    </recommendedName>
    <alternativeName>
        <fullName evidence="1">N-succinyl-LL-2,6-diaminoheptanedioate amidohydrolase</fullName>
    </alternativeName>
</protein>